<reference key="1">
    <citation type="journal article" date="2003" name="Science">
        <title>STAT1-dependent innate immunity to a Norwalk-like virus.</title>
        <authorList>
            <person name="Karst S.M."/>
            <person name="Wobus C.E."/>
            <person name="Lay M."/>
            <person name="Davidson J."/>
            <person name="Virgin H.W."/>
        </authorList>
    </citation>
    <scope>NUCLEOTIDE SEQUENCE [GENOMIC RNA]</scope>
</reference>
<reference key="2">
    <citation type="journal article" date="2005" name="Clin. Diagn. Lab. Immunol.">
        <title>Development of a microsphere-based serologic multiplexed fluorescent immunoassay and a reverse transcriptase PCR assay to detect murine norovirus 1 infection in mice.</title>
        <authorList>
            <person name="Hsu C.C."/>
            <person name="Wobus C.E."/>
            <person name="Steffen E.K."/>
            <person name="Riley L.K."/>
            <person name="Livingston R.S."/>
        </authorList>
    </citation>
    <scope>NUCLEOTIDE SEQUENCE [GENOMIC RNA]</scope>
</reference>
<reference key="3">
    <citation type="journal article" date="2007" name="J. Virol.">
        <title>Murine norovirus 1 infection is associated with histopathological changes in immunocompetent hosts, but clinical disease is prevented by STAT1-dependent interferon responses.</title>
        <authorList>
            <person name="Mumphrey S.M."/>
            <person name="Changotra H."/>
            <person name="Moore T.N."/>
            <person name="Heimann-Nichols E.R."/>
            <person name="Wobus C.E."/>
            <person name="Reilly M.J."/>
            <person name="Moghadamfalahi M."/>
            <person name="Shukla D."/>
            <person name="Karst S.M."/>
        </authorList>
    </citation>
    <scope>NUCLEOTIDE SEQUENCE [GENOMIC RNA]</scope>
    <source>
        <strain>CW3</strain>
    </source>
</reference>
<reference key="4">
    <citation type="journal article" date="2007" name="J. Virol.">
        <title>Murine noroviruses comprising a single genogroup exhibit biological diversity despite limited sequence divergence.</title>
        <authorList>
            <person name="Thackray L.B."/>
            <person name="Wobus C.E."/>
            <person name="Chachu K.A."/>
            <person name="Liu B."/>
            <person name="Alegre E.R."/>
            <person name="Henderson K.S."/>
            <person name="Kelley S.T."/>
            <person name="Virgin H.W."/>
        </authorList>
    </citation>
    <scope>NUCLEOTIDE SEQUENCE [GENOMIC RNA]</scope>
</reference>
<reference key="5">
    <citation type="journal article" date="2012" name="J. Virol.">
        <title>Protruding domain of capsid protein is necessary and sufficient to determine murine norovirus replication and pathogenesis in vivo.</title>
        <authorList>
            <person name="Strong D.W."/>
            <person name="Thackray L.B."/>
            <person name="Smith T.J."/>
            <person name="Virgin H.W."/>
        </authorList>
    </citation>
    <scope>DOMAIN</scope>
    <source>
        <strain>CR6</strain>
        <strain>CW3</strain>
    </source>
</reference>
<reference key="6">
    <citation type="journal article" date="2016" name="Proc. Natl. Acad. Sci. U.S.A.">
        <title>Functional receptor molecules CD300lf and CD300ld within the CD300 family enable murine noroviruses to infect cells.</title>
        <authorList>
            <person name="Haga K."/>
            <person name="Fujimoto A."/>
            <person name="Takai-Todaka R."/>
            <person name="Miki M."/>
            <person name="Doan Y.H."/>
            <person name="Murakami K."/>
            <person name="Yokoyama M."/>
            <person name="Murata K."/>
            <person name="Nakanishi A."/>
            <person name="Katayama K."/>
        </authorList>
    </citation>
    <scope>INTERACTION WITH HOST CD300LF</scope>
    <scope>INTERACTION WITH HOST CD300LD</scope>
</reference>
<reference key="7">
    <citation type="journal article" date="2016" name="Science">
        <title>Discovery of a proteinaceous cellular receptor for a norovirus.</title>
        <authorList>
            <person name="Orchard R.C."/>
            <person name="Wilen C.B."/>
            <person name="Doench J.G."/>
            <person name="Baldridge M.T."/>
            <person name="McCune B.T."/>
            <person name="Lee Y.C."/>
            <person name="Lee S."/>
            <person name="Pruett-Miller S.M."/>
            <person name="Nelson C.A."/>
            <person name="Fremont D.H."/>
            <person name="Virgin H.W."/>
        </authorList>
    </citation>
    <scope>FUNCTION</scope>
    <scope>INTERACTION WITH HOST CD300LF</scope>
</reference>
<reference key="8">
    <citation type="journal article" date="2010" name="J. Virol.">
        <title>High-resolution cryo-electron microscopy structures of murine norovirus 1 and rabbit hemorrhagic disease virus reveal marked flexibility in the receptor binding domains.</title>
        <authorList>
            <person name="Katpally U."/>
            <person name="Voss N.R."/>
            <person name="Cavazza T."/>
            <person name="Taube S."/>
            <person name="Rubin J.R."/>
            <person name="Young V.L."/>
            <person name="Stuckey J."/>
            <person name="Ward V.K."/>
            <person name="Virgin H.W. IV"/>
            <person name="Wobus C.E."/>
            <person name="Smith T.J."/>
        </authorList>
    </citation>
    <scope>STRUCTURE BY ELECTRON MICROSCOPY (8.0 ANGSTROMS) OF THE VIRION</scope>
    <scope>DOMAIN</scope>
</reference>
<reference evidence="9 10 11" key="9">
    <citation type="journal article" date="2018" name="Proc. Natl. Acad. Sci. U.S.A.">
        <title>Structural basis for murine norovirus engagement of bile acids and the CD300lf receptor.</title>
        <authorList>
            <person name="Nelson C."/>
            <person name="Wilen C."/>
            <person name="Dai Y.N."/>
            <person name="Orchard R."/>
            <person name="Kim A."/>
            <person name="Stegeman R."/>
            <person name="Hsieh L."/>
            <person name="Smith T."/>
            <person name="Virgin H."/>
            <person name="Fremont D."/>
        </authorList>
    </citation>
    <scope>X-RAY CRYSTALLOGRAPHY (1.80 ANGSTROMS) OF 10-221 AND 229-532 IN COMPLEX WITH THE HOST RECEPTOR CD300LF</scope>
    <scope>SUBUNIT</scope>
    <scope>INTERACTION WITH HOST CD300LF</scope>
    <scope>FUNCTION</scope>
    <scope>INTERACTION WITH BILE ACIDS</scope>
    <source>
        <strain>CW1</strain>
        <strain>CW3</strain>
    </source>
</reference>
<reference evidence="12 13" key="10">
    <citation type="journal article" date="2020" name="J. Virol.">
        <title>Nanobody-Mediated Neutralization Reveals an Achilles Heel for Norovirus.</title>
        <authorList>
            <person name="Koromyslova A.D."/>
            <person name="Devant J.M."/>
            <person name="Kilic T."/>
            <person name="Sabin C.D."/>
            <person name="Malak V."/>
            <person name="Hansman G.S."/>
        </authorList>
    </citation>
    <scope>X-RAY CRYSTALLOGRAPHY (1.72 ANGSTROMS) OF 228-533 IN COMPLEX WITH MG(2+)</scope>
</reference>
<reference evidence="14 15" key="11">
    <citation type="journal article" date="2021" name="J. Virol.">
        <title>Multiple Signals in the Gut Contract the Mouse Norovirus Capsid To Block Antibody Binding While Enhancing Receptor Affinity.</title>
        <authorList>
            <person name="Williams A.N."/>
            <person name="Sherman M.B."/>
            <person name="Smith H.Q."/>
            <person name="Taube S."/>
            <person name="Pettitt B.M."/>
            <person name="Wobus C.E."/>
            <person name="Smith T.J."/>
        </authorList>
    </citation>
    <scope>STRUCTURE BY ELECTRON MICROSCOPY (3.00 ANGSTROMS)</scope>
</reference>
<accession>Q80J94</accession>
<gene>
    <name type="ORF">ORF2</name>
</gene>
<sequence length="541" mass="58661">MRMSDGAAPKANGSEASGQDLVPAAVEQAVPIQPVAGAALAAPAAGQINQIDPWIFQNFVQCPLGEFSISPRNTPGEILFDLALGPGLNPYLAHLSAMYTGWVGNMEVQLVLAGNAFTAGKVVVALVPPYFPKGSLTTAQITCFPHVMCDVRTLEPIQLPLLDVRRVLWHATQDQEESMRLVCMLYTPLRTNSPGDESFVVSGRLLSKPAADFNFVYLTPPIERTIYRMVDLPVIQPRLCTHARWPAPVYGLLVDPSLPSNPQWQNGRVHVDGTLLGTTPISGSWVSCFAAEAAYKFQSGTGEVATFTLIEQDGSAYVPGDRAAPLGYPDFSGQLEIEVQTETTKTGDKLKVTTFEMILGPTTNADQAPYQGRVFASVTAAASLDLVDGRVRAVPRSIYGFQDTIPEYNDGLLVPLAPPIGPFLPGEVLLRFRTYMRQIDTADAAAEAIDCALPQEFVSWFASNAFTVQSEALLLRYRNTLTGQLLFECKLYNEGYIALSYSGSGPLTFPTDGIFEVVSWVPRLYQLASVGSLATGRMLKQ</sequence>
<comment type="function">
    <text evidence="2 5 7">Capsid protein self assembles to form an icosahedral capsid with a T=3 symmetry, about 38 nm in diameter, and consisting of 180 capsid proteins. A smaller form of capsid with a diameter of 23 nm might be capsid proteins assembled as icosahedron with T=1 symmetry. The capsid encapsulates the genomic RNA and is decorated with VP2 proteins (By similarity). Mediates virion attachment to the host cell receptor CD300LF (PubMed:27540007, PubMed:30194229).</text>
</comment>
<comment type="subunit">
    <text evidence="1 2 6 7">Homodimer (PubMed:30194229). Homomultimer (By similarity). Interacts with the minor capsid protein VP2 (By similarity). Interacts (via P2 subdomain) with host receptor CD300LF (via N-terminus); this interaction requires Mg(2+) and Ca(2+), and allows viral binding and entry into the host cell (PubMed:27681626, PubMed:30194229). Stochioimetry is 2:2 (PubMed:30194229). Bile acids interact with the P domain dimer interface and act as cofactors enhancing virus binding and infectivity (PubMed:30194229). Interacts with host receptor CD300LD; this interaction allows viral binding and entry into the host cell (PubMed:27681626).</text>
</comment>
<comment type="subcellular location">
    <subcellularLocation>
        <location evidence="2">Virion</location>
    </subcellularLocation>
    <subcellularLocation>
        <location evidence="2">Host cytoplasm</location>
    </subcellularLocation>
</comment>
<comment type="domain">
    <text evidence="2 3 4">The shell domain (S domain) contains elements essential for the formation of the icosahedron. The Protruding domain (P domain) is divided into sub-domains P1 and P2 (PubMed:22258242). P domain interacts in dimeric contacts that increase the stability of the capsid and form the protrusions on the virion (PubMed:20335264). An hypervariable region in P2 is thought to play an important role in receptor binding and immune reactivity (By similarity).</text>
</comment>
<comment type="similarity">
    <text evidence="8">Belongs to the caliciviridae capsid protein family.</text>
</comment>
<organism>
    <name type="scientific">Norovirus (isolate Mouse/NoV/United States/MNV1/2002/GV)</name>
    <name type="common">MNV-1</name>
    <name type="synonym">Murine Norovirus 1</name>
    <dbReference type="NCBI Taxonomy" id="223997"/>
    <lineage>
        <taxon>Viruses</taxon>
        <taxon>Riboviria</taxon>
        <taxon>Orthornavirae</taxon>
        <taxon>Pisuviricota</taxon>
        <taxon>Pisoniviricetes</taxon>
        <taxon>Picornavirales</taxon>
        <taxon>Caliciviridae</taxon>
        <taxon>Norovirus</taxon>
        <taxon>Norwalk virus</taxon>
    </lineage>
</organism>
<evidence type="ECO:0000250" key="1">
    <source>
        <dbReference type="UniProtKB" id="P27406"/>
    </source>
</evidence>
<evidence type="ECO:0000250" key="2">
    <source>
        <dbReference type="UniProtKB" id="Q83884"/>
    </source>
</evidence>
<evidence type="ECO:0000269" key="3">
    <source>
    </source>
</evidence>
<evidence type="ECO:0000269" key="4">
    <source>
    </source>
</evidence>
<evidence type="ECO:0000269" key="5">
    <source>
    </source>
</evidence>
<evidence type="ECO:0000269" key="6">
    <source>
    </source>
</evidence>
<evidence type="ECO:0000269" key="7">
    <source>
    </source>
</evidence>
<evidence type="ECO:0000305" key="8"/>
<evidence type="ECO:0007744" key="9">
    <source>
        <dbReference type="PDB" id="6C6Q"/>
    </source>
</evidence>
<evidence type="ECO:0007744" key="10">
    <source>
        <dbReference type="PDB" id="6CRJ"/>
    </source>
</evidence>
<evidence type="ECO:0007744" key="11">
    <source>
        <dbReference type="PDB" id="6E47"/>
    </source>
</evidence>
<evidence type="ECO:0007744" key="12">
    <source>
        <dbReference type="PDB" id="6XW4"/>
    </source>
</evidence>
<evidence type="ECO:0007744" key="13">
    <source>
        <dbReference type="PDB" id="6XW5"/>
    </source>
</evidence>
<evidence type="ECO:0007744" key="14">
    <source>
        <dbReference type="PDB" id="7N6Y"/>
    </source>
</evidence>
<evidence type="ECO:0007744" key="15">
    <source>
        <dbReference type="PDB" id="7N7F"/>
    </source>
</evidence>
<evidence type="ECO:0007829" key="16">
    <source>
        <dbReference type="PDB" id="6E47"/>
    </source>
</evidence>
<evidence type="ECO:0007829" key="17">
    <source>
        <dbReference type="PDB" id="6E48"/>
    </source>
</evidence>
<evidence type="ECO:0007829" key="18">
    <source>
        <dbReference type="PDB" id="6XW4"/>
    </source>
</evidence>
<evidence type="ECO:0007829" key="19">
    <source>
        <dbReference type="PDB" id="6XW5"/>
    </source>
</evidence>
<evidence type="ECO:0007829" key="20">
    <source>
        <dbReference type="PDB" id="6XW6"/>
    </source>
</evidence>
<evidence type="ECO:0007829" key="21">
    <source>
        <dbReference type="PDB" id="6XW7"/>
    </source>
</evidence>
<evidence type="ECO:0007829" key="22">
    <source>
        <dbReference type="PDB" id="7N6Y"/>
    </source>
</evidence>
<evidence type="ECO:0007829" key="23">
    <source>
        <dbReference type="PDB" id="7N7F"/>
    </source>
</evidence>
<proteinExistence type="evidence at protein level"/>
<dbReference type="EMBL" id="AY228235">
    <property type="protein sequence ID" value="AAO63099.2"/>
    <property type="molecule type" value="Genomic_RNA"/>
</dbReference>
<dbReference type="EMBL" id="EF014462">
    <property type="protein sequence ID" value="ABJ98944.1"/>
    <property type="molecule type" value="Genomic_RNA"/>
</dbReference>
<dbReference type="EMBL" id="EU004654">
    <property type="protein sequence ID" value="ABU55541.1"/>
    <property type="molecule type" value="Genomic_RNA"/>
</dbReference>
<dbReference type="EMBL" id="EU004655">
    <property type="protein sequence ID" value="ABU55544.1"/>
    <property type="molecule type" value="Genomic_RNA"/>
</dbReference>
<dbReference type="EMBL" id="EU004657">
    <property type="protein sequence ID" value="ABU55550.1"/>
    <property type="molecule type" value="Genomic_RNA"/>
</dbReference>
<dbReference type="EMBL" id="EU004658">
    <property type="protein sequence ID" value="ABU55553.1"/>
    <property type="molecule type" value="Genomic_RNA"/>
</dbReference>
<dbReference type="EMBL" id="EU004661">
    <property type="protein sequence ID" value="ABU55562.1"/>
    <property type="molecule type" value="Genomic_RNA"/>
</dbReference>
<dbReference type="EMBL" id="EU004662">
    <property type="protein sequence ID" value="ABU55565.1"/>
    <property type="molecule type" value="Genomic_RNA"/>
</dbReference>
<dbReference type="PDB" id="6C6Q">
    <property type="method" value="X-ray"/>
    <property type="resolution" value="2.00 A"/>
    <property type="chains" value="A/B=229-531"/>
</dbReference>
<dbReference type="PDB" id="6CRJ">
    <property type="method" value="EM"/>
    <property type="resolution" value="8.00 A"/>
    <property type="chains" value="A/B/C=10-221"/>
</dbReference>
<dbReference type="PDB" id="6E47">
    <property type="method" value="X-ray"/>
    <property type="resolution" value="1.95 A"/>
    <property type="chains" value="A/B=229-530"/>
</dbReference>
<dbReference type="PDB" id="6E48">
    <property type="method" value="X-ray"/>
    <property type="resolution" value="1.80 A"/>
    <property type="chains" value="A/B=229-532"/>
</dbReference>
<dbReference type="PDB" id="6XW4">
    <property type="method" value="X-ray"/>
    <property type="resolution" value="2.19 A"/>
    <property type="chains" value="A/B=228-533"/>
</dbReference>
<dbReference type="PDB" id="6XW5">
    <property type="method" value="X-ray"/>
    <property type="resolution" value="1.72 A"/>
    <property type="chains" value="A/B=228-533"/>
</dbReference>
<dbReference type="PDB" id="6XW6">
    <property type="method" value="X-ray"/>
    <property type="resolution" value="1.96 A"/>
    <property type="chains" value="A/B=228-533"/>
</dbReference>
<dbReference type="PDB" id="6XW7">
    <property type="method" value="X-ray"/>
    <property type="resolution" value="2.15 A"/>
    <property type="chains" value="A/B/E/F=226-533"/>
</dbReference>
<dbReference type="PDB" id="7N6Y">
    <property type="method" value="EM"/>
    <property type="resolution" value="3.30 A"/>
    <property type="chains" value="A/B/C=1-541"/>
</dbReference>
<dbReference type="PDB" id="7N7F">
    <property type="method" value="EM"/>
    <property type="resolution" value="3.00 A"/>
    <property type="chains" value="A/B/C=1-541"/>
</dbReference>
<dbReference type="PDBsum" id="6C6Q"/>
<dbReference type="PDBsum" id="6CRJ"/>
<dbReference type="PDBsum" id="6E47"/>
<dbReference type="PDBsum" id="6E48"/>
<dbReference type="PDBsum" id="6XW4"/>
<dbReference type="PDBsum" id="6XW5"/>
<dbReference type="PDBsum" id="6XW6"/>
<dbReference type="PDBsum" id="6XW7"/>
<dbReference type="PDBsum" id="7N6Y"/>
<dbReference type="PDBsum" id="7N7F"/>
<dbReference type="EMDB" id="EMD-10127"/>
<dbReference type="EMDB" id="EMD-10128"/>
<dbReference type="EMDB" id="EMD-24211"/>
<dbReference type="EMDB" id="EMD-24226"/>
<dbReference type="SMR" id="Q80J94"/>
<dbReference type="Proteomes" id="UP000109015">
    <property type="component" value="Genome"/>
</dbReference>
<dbReference type="Proteomes" id="UP000179397">
    <property type="component" value="Genome"/>
</dbReference>
<dbReference type="Proteomes" id="UP000179398">
    <property type="component" value="Genome"/>
</dbReference>
<dbReference type="Proteomes" id="UP000179399">
    <property type="component" value="Genome"/>
</dbReference>
<dbReference type="Proteomes" id="UP000179401">
    <property type="component" value="Genome"/>
</dbReference>
<dbReference type="Proteomes" id="UP000179402">
    <property type="component" value="Genome"/>
</dbReference>
<dbReference type="Proteomes" id="UP000179405">
    <property type="component" value="Genome"/>
</dbReference>
<dbReference type="Proteomes" id="UP000179406">
    <property type="component" value="Genome"/>
</dbReference>
<dbReference type="GO" id="GO:0030430">
    <property type="term" value="C:host cell cytoplasm"/>
    <property type="evidence" value="ECO:0007669"/>
    <property type="project" value="UniProtKB-SubCell"/>
</dbReference>
<dbReference type="GO" id="GO:0044423">
    <property type="term" value="C:virion component"/>
    <property type="evidence" value="ECO:0007669"/>
    <property type="project" value="UniProtKB-KW"/>
</dbReference>
<dbReference type="CDD" id="cd00205">
    <property type="entry name" value="rhv_like"/>
    <property type="match status" value="1"/>
</dbReference>
<dbReference type="FunFam" id="2.40.30.120:FF:000002">
    <property type="entry name" value="Capsid protein"/>
    <property type="match status" value="1"/>
</dbReference>
<dbReference type="FunFam" id="2.60.120.20:FF:000008">
    <property type="entry name" value="Capsid protein VP1"/>
    <property type="match status" value="1"/>
</dbReference>
<dbReference type="Gene3D" id="2.60.120.20">
    <property type="match status" value="1"/>
</dbReference>
<dbReference type="Gene3D" id="2.40.30.120">
    <property type="entry name" value="Positive stranded ssRNA viruses"/>
    <property type="match status" value="1"/>
</dbReference>
<dbReference type="Gene3D" id="2.40.510.10">
    <property type="entry name" value="Positive stranded ssRNA viruses"/>
    <property type="match status" value="1"/>
</dbReference>
<dbReference type="InterPro" id="IPR004005">
    <property type="entry name" value="Calicivirus_coat"/>
</dbReference>
<dbReference type="InterPro" id="IPR013643">
    <property type="entry name" value="Calicivirus_coat_C"/>
</dbReference>
<dbReference type="InterPro" id="IPR033703">
    <property type="entry name" value="Rhv-like"/>
</dbReference>
<dbReference type="InterPro" id="IPR029053">
    <property type="entry name" value="Viral_coat"/>
</dbReference>
<dbReference type="Pfam" id="PF00915">
    <property type="entry name" value="Calici_coat"/>
    <property type="match status" value="1"/>
</dbReference>
<dbReference type="Pfam" id="PF08435">
    <property type="entry name" value="Calici_coat_C"/>
    <property type="match status" value="1"/>
</dbReference>
<dbReference type="SUPFAM" id="SSF88633">
    <property type="entry name" value="Positive stranded ssRNA viruses"/>
    <property type="match status" value="1"/>
</dbReference>
<feature type="chain" id="PRO_0000460243" description="Capsid protein VP1">
    <location>
        <begin position="1"/>
        <end position="541"/>
    </location>
</feature>
<feature type="region of interest" description="Shell domain" evidence="2">
    <location>
        <begin position="1"/>
        <end position="224"/>
    </location>
</feature>
<feature type="region of interest" description="Protruding domain" evidence="2">
    <location>
        <begin position="225"/>
        <end position="541"/>
    </location>
</feature>
<feature type="region of interest" description="P1 sub-domain 1" evidence="2">
    <location>
        <begin position="225"/>
        <end position="277"/>
    </location>
</feature>
<feature type="region of interest" description="P2 sub-domain" evidence="4">
    <location>
        <begin position="278"/>
        <end position="416"/>
    </location>
</feature>
<feature type="region of interest" description="Interaction with host receptor CD300LF" evidence="7">
    <location>
        <begin position="298"/>
        <end position="366"/>
    </location>
</feature>
<feature type="region of interest" description="P1 sub-domain 2" evidence="2">
    <location>
        <begin position="417"/>
        <end position="541"/>
    </location>
</feature>
<feature type="helix" evidence="23">
    <location>
        <begin position="38"/>
        <end position="41"/>
    </location>
</feature>
<feature type="helix" evidence="23">
    <location>
        <begin position="55"/>
        <end position="57"/>
    </location>
</feature>
<feature type="strand" evidence="23">
    <location>
        <begin position="60"/>
        <end position="69"/>
    </location>
</feature>
<feature type="strand" evidence="23">
    <location>
        <begin position="78"/>
        <end position="85"/>
    </location>
</feature>
<feature type="helix" evidence="23">
    <location>
        <begin position="86"/>
        <end position="88"/>
    </location>
</feature>
<feature type="helix" evidence="23">
    <location>
        <begin position="90"/>
        <end position="95"/>
    </location>
</feature>
<feature type="helix" evidence="23">
    <location>
        <begin position="96"/>
        <end position="98"/>
    </location>
</feature>
<feature type="strand" evidence="23">
    <location>
        <begin position="99"/>
        <end position="103"/>
    </location>
</feature>
<feature type="strand" evidence="23">
    <location>
        <begin position="106"/>
        <end position="112"/>
    </location>
</feature>
<feature type="strand" evidence="23">
    <location>
        <begin position="121"/>
        <end position="125"/>
    </location>
</feature>
<feature type="helix" evidence="23">
    <location>
        <begin position="138"/>
        <end position="141"/>
    </location>
</feature>
<feature type="strand" evidence="23">
    <location>
        <begin position="144"/>
        <end position="150"/>
    </location>
</feature>
<feature type="strand" evidence="23">
    <location>
        <begin position="157"/>
        <end position="161"/>
    </location>
</feature>
<feature type="strand" evidence="23">
    <location>
        <begin position="166"/>
        <end position="171"/>
    </location>
</feature>
<feature type="turn" evidence="23">
    <location>
        <begin position="172"/>
        <end position="175"/>
    </location>
</feature>
<feature type="strand" evidence="23">
    <location>
        <begin position="180"/>
        <end position="185"/>
    </location>
</feature>
<feature type="strand" evidence="23">
    <location>
        <begin position="193"/>
        <end position="195"/>
    </location>
</feature>
<feature type="strand" evidence="23">
    <location>
        <begin position="201"/>
        <end position="209"/>
    </location>
</feature>
<feature type="strand" evidence="22">
    <location>
        <begin position="223"/>
        <end position="227"/>
    </location>
</feature>
<feature type="helix" evidence="19">
    <location>
        <begin position="237"/>
        <end position="239"/>
    </location>
</feature>
<feature type="strand" evidence="19">
    <location>
        <begin position="243"/>
        <end position="248"/>
    </location>
</feature>
<feature type="strand" evidence="19">
    <location>
        <begin position="251"/>
        <end position="254"/>
    </location>
</feature>
<feature type="strand" evidence="22">
    <location>
        <begin position="256"/>
        <end position="258"/>
    </location>
</feature>
<feature type="strand" evidence="17">
    <location>
        <begin position="265"/>
        <end position="267"/>
    </location>
</feature>
<feature type="strand" evidence="22">
    <location>
        <begin position="271"/>
        <end position="273"/>
    </location>
</feature>
<feature type="helix" evidence="19">
    <location>
        <begin position="283"/>
        <end position="285"/>
    </location>
</feature>
<feature type="strand" evidence="19">
    <location>
        <begin position="289"/>
        <end position="298"/>
    </location>
</feature>
<feature type="turn" evidence="19">
    <location>
        <begin position="299"/>
        <end position="301"/>
    </location>
</feature>
<feature type="strand" evidence="19">
    <location>
        <begin position="302"/>
        <end position="310"/>
    </location>
</feature>
<feature type="strand" evidence="19">
    <location>
        <begin position="321"/>
        <end position="325"/>
    </location>
</feature>
<feature type="strand" evidence="19">
    <location>
        <begin position="331"/>
        <end position="341"/>
    </location>
</feature>
<feature type="strand" evidence="18">
    <location>
        <begin position="345"/>
        <end position="347"/>
    </location>
</feature>
<feature type="strand" evidence="19">
    <location>
        <begin position="352"/>
        <end position="358"/>
    </location>
</feature>
<feature type="turn" evidence="21">
    <location>
        <begin position="363"/>
        <end position="365"/>
    </location>
</feature>
<feature type="helix" evidence="19">
    <location>
        <begin position="369"/>
        <end position="371"/>
    </location>
</feature>
<feature type="strand" evidence="19">
    <location>
        <begin position="373"/>
        <end position="379"/>
    </location>
</feature>
<feature type="strand" evidence="19">
    <location>
        <begin position="389"/>
        <end position="404"/>
    </location>
</feature>
<feature type="strand" evidence="22">
    <location>
        <begin position="408"/>
        <end position="412"/>
    </location>
</feature>
<feature type="strand" evidence="19">
    <location>
        <begin position="427"/>
        <end position="429"/>
    </location>
</feature>
<feature type="strand" evidence="19">
    <location>
        <begin position="431"/>
        <end position="439"/>
    </location>
</feature>
<feature type="strand" evidence="20">
    <location>
        <begin position="440"/>
        <end position="442"/>
    </location>
</feature>
<feature type="strand" evidence="19">
    <location>
        <begin position="444"/>
        <end position="453"/>
    </location>
</feature>
<feature type="helix" evidence="19">
    <location>
        <begin position="455"/>
        <end position="463"/>
    </location>
</feature>
<feature type="strand" evidence="19">
    <location>
        <begin position="470"/>
        <end position="479"/>
    </location>
</feature>
<feature type="turn" evidence="19">
    <location>
        <begin position="480"/>
        <end position="482"/>
    </location>
</feature>
<feature type="strand" evidence="19">
    <location>
        <begin position="485"/>
        <end position="492"/>
    </location>
</feature>
<feature type="turn" evidence="21">
    <location>
        <begin position="493"/>
        <end position="495"/>
    </location>
</feature>
<feature type="strand" evidence="19">
    <location>
        <begin position="497"/>
        <end position="500"/>
    </location>
</feature>
<feature type="strand" evidence="22">
    <location>
        <begin position="503"/>
        <end position="505"/>
    </location>
</feature>
<feature type="strand" evidence="16">
    <location>
        <begin position="507"/>
        <end position="509"/>
    </location>
</feature>
<feature type="strand" evidence="19">
    <location>
        <begin position="511"/>
        <end position="521"/>
    </location>
</feature>
<keyword id="KW-0002">3D-structure</keyword>
<keyword id="KW-1035">Host cytoplasm</keyword>
<keyword id="KW-0946">Virion</keyword>
<name>CAPSD_MNV1</name>
<protein>
    <recommendedName>
        <fullName>Capsid protein VP1</fullName>
        <shortName>CP</shortName>
    </recommendedName>
    <alternativeName>
        <fullName>Coat protein</fullName>
    </alternativeName>
</protein>